<sequence>MALLPRALSSGGRPSWRRAARASRGFPLPLPFPAAATHALSRAMACRQEPQPQGPPPSAGAVVSYDYLVIGGGSGGLASARRAAELGARAAVVESHKLGGTCVNVGCVPKKVMWNTAVHSEFLHDHGDYGFSSCEGKFNWRVIKEKRDTYVSRLNTIYQNNLTKAHIEIIHGHAVFTSDTKPTIEVSGRKYTAPHILIATGGMPSSPHESQIPGASLGITSDGFFELEELPSRSVIVGAGYIAVEIAGILSALGSKTSLMIRHDKVLRSFDSMISTNCTEELENAGVEVLKFSQVKEVKKTSSGLEVSLVTAVPGRLPVMTTISDVDCLLWAIGRDPNSKGLSLNKLGIKTDDKGHIIVDEFQNTNVKGIYAVGDVCGKALLTPVAIAAGRKLAHRLFENKEDSKLDYNNIPTVVFSHPPIGTVGLTEDEAIHKYGKENVKIYSTSFTPMYHAVTKRKTKCVMKMVCAYEEEKVVGIHMQGLGCDEMLQGFAVAVKMGATKADFDNTVAIHPTSSEELVPLR</sequence>
<protein>
    <recommendedName>
        <fullName>Glutathione reductase, mitochondrial</fullName>
        <shortName>GR</shortName>
        <shortName>GRase</shortName>
        <ecNumber>1.8.1.7</ecNumber>
    </recommendedName>
</protein>
<name>GSHR_CALJA</name>
<reference key="1">
    <citation type="submission" date="2007-01" db="EMBL/GenBank/DDBJ databases">
        <title>Free radical scavenging enzymes in Callithrix jacchus.</title>
        <authorList>
            <person name="Atanasova S."/>
            <person name="von Ahsen N."/>
            <person name="Schlumbohm C."/>
            <person name="Wieland E."/>
            <person name="Oellerich M."/>
            <person name="Armstrong V."/>
        </authorList>
    </citation>
    <scope>NUCLEOTIDE SEQUENCE [MRNA]</scope>
</reference>
<accession>A2TIL1</accession>
<feature type="transit peptide" description="Mitochondrion" evidence="3">
    <location>
        <begin position="1"/>
        <end position="43"/>
    </location>
</feature>
<feature type="chain" id="PRO_0000314948" description="Glutathione reductase, mitochondrial">
    <location>
        <begin position="44"/>
        <end position="522"/>
    </location>
</feature>
<feature type="active site" description="Proton acceptor" evidence="1">
    <location>
        <position position="511"/>
    </location>
</feature>
<feature type="binding site" evidence="1">
    <location>
        <position position="74"/>
    </location>
    <ligand>
        <name>FAD</name>
        <dbReference type="ChEBI" id="CHEBI:57692"/>
    </ligand>
</feature>
<feature type="binding site" evidence="1">
    <location>
        <position position="74"/>
    </location>
    <ligand>
        <name>glutathione</name>
        <dbReference type="ChEBI" id="CHEBI:57925"/>
    </ligand>
</feature>
<feature type="binding site" evidence="1">
    <location>
        <position position="75"/>
    </location>
    <ligand>
        <name>FAD</name>
        <dbReference type="ChEBI" id="CHEBI:57692"/>
    </ligand>
</feature>
<feature type="binding site" evidence="1">
    <location>
        <position position="81"/>
    </location>
    <ligand>
        <name>glutathione</name>
        <dbReference type="ChEBI" id="CHEBI:57925"/>
    </ligand>
</feature>
<feature type="binding site" evidence="1">
    <location>
        <position position="94"/>
    </location>
    <ligand>
        <name>FAD</name>
        <dbReference type="ChEBI" id="CHEBI:57692"/>
    </ligand>
</feature>
<feature type="binding site" evidence="1">
    <location>
        <position position="101"/>
    </location>
    <ligand>
        <name>FAD</name>
        <dbReference type="ChEBI" id="CHEBI:57692"/>
    </ligand>
</feature>
<feature type="binding site" evidence="1">
    <location>
        <position position="102"/>
    </location>
    <ligand>
        <name>FAD</name>
        <dbReference type="ChEBI" id="CHEBI:57692"/>
    </ligand>
</feature>
<feature type="binding site" evidence="1">
    <location>
        <position position="110"/>
    </location>
    <ligand>
        <name>FAD</name>
        <dbReference type="ChEBI" id="CHEBI:57692"/>
    </ligand>
</feature>
<feature type="binding site" evidence="1">
    <location>
        <position position="158"/>
    </location>
    <ligand>
        <name>glutathione</name>
        <dbReference type="ChEBI" id="CHEBI:57925"/>
    </ligand>
</feature>
<feature type="binding site" evidence="1">
    <location>
        <position position="174"/>
    </location>
    <ligand>
        <name>FAD</name>
        <dbReference type="ChEBI" id="CHEBI:57692"/>
    </ligand>
</feature>
<feature type="binding site" evidence="1">
    <location>
        <position position="239"/>
    </location>
    <ligand>
        <name>NADP(+)</name>
        <dbReference type="ChEBI" id="CHEBI:58349"/>
    </ligand>
</feature>
<feature type="binding site" evidence="1">
    <location>
        <position position="242"/>
    </location>
    <ligand>
        <name>NADP(+)</name>
        <dbReference type="ChEBI" id="CHEBI:58349"/>
    </ligand>
</feature>
<feature type="binding site" evidence="1">
    <location>
        <position position="245"/>
    </location>
    <ligand>
        <name>NADP(+)</name>
        <dbReference type="ChEBI" id="CHEBI:58349"/>
    </ligand>
</feature>
<feature type="binding site" evidence="1">
    <location>
        <position position="262"/>
    </location>
    <ligand>
        <name>NADP(+)</name>
        <dbReference type="ChEBI" id="CHEBI:58349"/>
    </ligand>
</feature>
<feature type="binding site" evidence="1">
    <location>
        <position position="268"/>
    </location>
    <ligand>
        <name>NADP(+)</name>
        <dbReference type="ChEBI" id="CHEBI:58349"/>
    </ligand>
</feature>
<feature type="binding site" evidence="1">
    <location>
        <position position="334"/>
    </location>
    <ligand>
        <name>NADP(+)</name>
        <dbReference type="ChEBI" id="CHEBI:58349"/>
    </ligand>
</feature>
<feature type="binding site" evidence="1">
    <location>
        <position position="375"/>
    </location>
    <ligand>
        <name>FAD</name>
        <dbReference type="ChEBI" id="CHEBI:57692"/>
    </ligand>
</feature>
<feature type="binding site" evidence="1">
    <location>
        <position position="381"/>
    </location>
    <ligand>
        <name>NADP(+)</name>
        <dbReference type="ChEBI" id="CHEBI:58349"/>
    </ligand>
</feature>
<feature type="binding site" evidence="1">
    <location>
        <position position="383"/>
    </location>
    <ligand>
        <name>FAD</name>
        <dbReference type="ChEBI" id="CHEBI:57692"/>
    </ligand>
</feature>
<feature type="binding site" evidence="1">
    <location>
        <position position="391"/>
    </location>
    <ligand>
        <name>glutathione</name>
        <dbReference type="ChEBI" id="CHEBI:57925"/>
    </ligand>
</feature>
<feature type="binding site" evidence="1">
    <location>
        <position position="414"/>
    </location>
    <ligand>
        <name>NADP(+)</name>
        <dbReference type="ChEBI" id="CHEBI:58349"/>
    </ligand>
</feature>
<feature type="binding site" evidence="1">
    <location>
        <position position="511"/>
    </location>
    <ligand>
        <name>FAD</name>
        <dbReference type="ChEBI" id="CHEBI:57692"/>
    </ligand>
</feature>
<feature type="modified residue" description="N6-acetyllysine" evidence="2">
    <location>
        <position position="97"/>
    </location>
</feature>
<feature type="disulfide bond" description="Redox-active" evidence="1">
    <location>
        <begin position="102"/>
        <end position="107"/>
    </location>
</feature>
<feature type="disulfide bond" description="Interchain" evidence="1">
    <location>
        <position position="134"/>
    </location>
</feature>
<feature type="splice variant" id="VSP_030441" description="In isoform Cytoplasmic." evidence="4">
    <location>
        <begin position="1"/>
        <end position="43"/>
    </location>
</feature>
<gene>
    <name type="primary">GSR</name>
</gene>
<keyword id="KW-0007">Acetylation</keyword>
<keyword id="KW-0024">Alternative initiation</keyword>
<keyword id="KW-0963">Cytoplasm</keyword>
<keyword id="KW-1015">Disulfide bond</keyword>
<keyword id="KW-0274">FAD</keyword>
<keyword id="KW-0285">Flavoprotein</keyword>
<keyword id="KW-0496">Mitochondrion</keyword>
<keyword id="KW-0521">NADP</keyword>
<keyword id="KW-0560">Oxidoreductase</keyword>
<keyword id="KW-0676">Redox-active center</keyword>
<keyword id="KW-1185">Reference proteome</keyword>
<keyword id="KW-0809">Transit peptide</keyword>
<evidence type="ECO:0000250" key="1">
    <source>
        <dbReference type="UniProtKB" id="P00390"/>
    </source>
</evidence>
<evidence type="ECO:0000250" key="2">
    <source>
        <dbReference type="UniProtKB" id="P47791"/>
    </source>
</evidence>
<evidence type="ECO:0000255" key="3"/>
<evidence type="ECO:0000305" key="4"/>
<dbReference type="EC" id="1.8.1.7"/>
<dbReference type="EMBL" id="EF203010">
    <property type="protein sequence ID" value="ABN05297.1"/>
    <property type="molecule type" value="mRNA"/>
</dbReference>
<dbReference type="RefSeq" id="NP_001171974.1">
    <molecule id="A2TIL1-1"/>
    <property type="nucleotide sequence ID" value="NM_001185045.1"/>
</dbReference>
<dbReference type="SMR" id="A2TIL1"/>
<dbReference type="FunCoup" id="A2TIL1">
    <property type="interactions" value="1484"/>
</dbReference>
<dbReference type="STRING" id="9483.ENSCJAP00000006959"/>
<dbReference type="GeneID" id="100393824"/>
<dbReference type="KEGG" id="cjc:100393824"/>
<dbReference type="CTD" id="2936"/>
<dbReference type="eggNOG" id="KOG0405">
    <property type="taxonomic scope" value="Eukaryota"/>
</dbReference>
<dbReference type="InParanoid" id="A2TIL1"/>
<dbReference type="OrthoDB" id="5956163at2759"/>
<dbReference type="Proteomes" id="UP000008225">
    <property type="component" value="Unplaced"/>
</dbReference>
<dbReference type="GO" id="GO:0005829">
    <property type="term" value="C:cytosol"/>
    <property type="evidence" value="ECO:0007669"/>
    <property type="project" value="TreeGrafter"/>
</dbReference>
<dbReference type="GO" id="GO:0005739">
    <property type="term" value="C:mitochondrion"/>
    <property type="evidence" value="ECO:0007669"/>
    <property type="project" value="UniProtKB-SubCell"/>
</dbReference>
<dbReference type="GO" id="GO:0050660">
    <property type="term" value="F:flavin adenine dinucleotide binding"/>
    <property type="evidence" value="ECO:0007669"/>
    <property type="project" value="InterPro"/>
</dbReference>
<dbReference type="GO" id="GO:0004362">
    <property type="term" value="F:glutathione-disulfide reductase (NADPH) activity"/>
    <property type="evidence" value="ECO:0007669"/>
    <property type="project" value="UniProtKB-EC"/>
</dbReference>
<dbReference type="GO" id="GO:0050661">
    <property type="term" value="F:NADP binding"/>
    <property type="evidence" value="ECO:0007669"/>
    <property type="project" value="InterPro"/>
</dbReference>
<dbReference type="GO" id="GO:0045454">
    <property type="term" value="P:cell redox homeostasis"/>
    <property type="evidence" value="ECO:0007669"/>
    <property type="project" value="InterPro"/>
</dbReference>
<dbReference type="GO" id="GO:0034599">
    <property type="term" value="P:cellular response to oxidative stress"/>
    <property type="evidence" value="ECO:0007669"/>
    <property type="project" value="TreeGrafter"/>
</dbReference>
<dbReference type="GO" id="GO:0006749">
    <property type="term" value="P:glutathione metabolic process"/>
    <property type="evidence" value="ECO:0007669"/>
    <property type="project" value="InterPro"/>
</dbReference>
<dbReference type="FunFam" id="3.30.390.30:FF:000003">
    <property type="entry name" value="Glutathione reductase"/>
    <property type="match status" value="1"/>
</dbReference>
<dbReference type="FunFam" id="3.50.50.60:FF:000484">
    <property type="entry name" value="Glutathione reductase, mitochondrial"/>
    <property type="match status" value="1"/>
</dbReference>
<dbReference type="FunFam" id="3.50.50.60:FF:000671">
    <property type="entry name" value="Thioredoxin reductase 2, tandem duplicate 1"/>
    <property type="match status" value="1"/>
</dbReference>
<dbReference type="Gene3D" id="3.30.390.30">
    <property type="match status" value="1"/>
</dbReference>
<dbReference type="Gene3D" id="3.50.50.60">
    <property type="entry name" value="FAD/NAD(P)-binding domain"/>
    <property type="match status" value="2"/>
</dbReference>
<dbReference type="InterPro" id="IPR036188">
    <property type="entry name" value="FAD/NAD-bd_sf"/>
</dbReference>
<dbReference type="InterPro" id="IPR023753">
    <property type="entry name" value="FAD/NAD-binding_dom"/>
</dbReference>
<dbReference type="InterPro" id="IPR016156">
    <property type="entry name" value="FAD/NAD-linked_Rdtase_dimer_sf"/>
</dbReference>
<dbReference type="InterPro" id="IPR006322">
    <property type="entry name" value="Glutathione_Rdtase_euk/bac"/>
</dbReference>
<dbReference type="InterPro" id="IPR046952">
    <property type="entry name" value="GSHR/TRXR-like"/>
</dbReference>
<dbReference type="InterPro" id="IPR001100">
    <property type="entry name" value="Pyr_nuc-diS_OxRdtase"/>
</dbReference>
<dbReference type="InterPro" id="IPR004099">
    <property type="entry name" value="Pyr_nucl-diS_OxRdtase_dimer"/>
</dbReference>
<dbReference type="InterPro" id="IPR012999">
    <property type="entry name" value="Pyr_OxRdtase_I_AS"/>
</dbReference>
<dbReference type="NCBIfam" id="TIGR01421">
    <property type="entry name" value="gluta_reduc_1"/>
    <property type="match status" value="1"/>
</dbReference>
<dbReference type="NCBIfam" id="NF004776">
    <property type="entry name" value="PRK06116.1"/>
    <property type="match status" value="1"/>
</dbReference>
<dbReference type="PANTHER" id="PTHR42737">
    <property type="entry name" value="GLUTATHIONE REDUCTASE"/>
    <property type="match status" value="1"/>
</dbReference>
<dbReference type="PANTHER" id="PTHR42737:SF5">
    <property type="entry name" value="GLUTATHIONE REDUCTASE, MITOCHONDRIAL"/>
    <property type="match status" value="1"/>
</dbReference>
<dbReference type="Pfam" id="PF07992">
    <property type="entry name" value="Pyr_redox_2"/>
    <property type="match status" value="1"/>
</dbReference>
<dbReference type="Pfam" id="PF02852">
    <property type="entry name" value="Pyr_redox_dim"/>
    <property type="match status" value="1"/>
</dbReference>
<dbReference type="PIRSF" id="PIRSF000350">
    <property type="entry name" value="Mercury_reductase_MerA"/>
    <property type="match status" value="1"/>
</dbReference>
<dbReference type="PRINTS" id="PR00368">
    <property type="entry name" value="FADPNR"/>
</dbReference>
<dbReference type="PRINTS" id="PR00411">
    <property type="entry name" value="PNDRDTASEI"/>
</dbReference>
<dbReference type="SUPFAM" id="SSF51905">
    <property type="entry name" value="FAD/NAD(P)-binding domain"/>
    <property type="match status" value="1"/>
</dbReference>
<dbReference type="SUPFAM" id="SSF55424">
    <property type="entry name" value="FAD/NAD-linked reductases, dimerisation (C-terminal) domain"/>
    <property type="match status" value="1"/>
</dbReference>
<dbReference type="PROSITE" id="PS00076">
    <property type="entry name" value="PYRIDINE_REDOX_1"/>
    <property type="match status" value="1"/>
</dbReference>
<organism>
    <name type="scientific">Callithrix jacchus</name>
    <name type="common">White-tufted-ear marmoset</name>
    <dbReference type="NCBI Taxonomy" id="9483"/>
    <lineage>
        <taxon>Eukaryota</taxon>
        <taxon>Metazoa</taxon>
        <taxon>Chordata</taxon>
        <taxon>Craniata</taxon>
        <taxon>Vertebrata</taxon>
        <taxon>Euteleostomi</taxon>
        <taxon>Mammalia</taxon>
        <taxon>Eutheria</taxon>
        <taxon>Euarchontoglires</taxon>
        <taxon>Primates</taxon>
        <taxon>Haplorrhini</taxon>
        <taxon>Platyrrhini</taxon>
        <taxon>Cebidae</taxon>
        <taxon>Callitrichinae</taxon>
        <taxon>Callithrix</taxon>
        <taxon>Callithrix</taxon>
    </lineage>
</organism>
<proteinExistence type="evidence at transcript level"/>
<comment type="function">
    <text evidence="1">Catalyzes the reduction of glutathione disulfide (GSSG) to reduced glutathione (GSH). Constitutes the major mechanism to maintain a high GSH:GSSG ratio in the cytosol.</text>
</comment>
<comment type="catalytic activity">
    <reaction evidence="1">
        <text>2 glutathione + NADP(+) = glutathione disulfide + NADPH + H(+)</text>
        <dbReference type="Rhea" id="RHEA:11740"/>
        <dbReference type="ChEBI" id="CHEBI:15378"/>
        <dbReference type="ChEBI" id="CHEBI:57783"/>
        <dbReference type="ChEBI" id="CHEBI:57925"/>
        <dbReference type="ChEBI" id="CHEBI:58297"/>
        <dbReference type="ChEBI" id="CHEBI:58349"/>
        <dbReference type="EC" id="1.8.1.7"/>
    </reaction>
</comment>
<comment type="cofactor">
    <cofactor evidence="1">
        <name>FAD</name>
        <dbReference type="ChEBI" id="CHEBI:57692"/>
    </cofactor>
    <text evidence="1">Binds 1 FAD per subunit.</text>
</comment>
<comment type="subunit">
    <text evidence="1">Homodimer; disulfide-linked.</text>
</comment>
<comment type="subcellular location">
    <molecule>Isoform Mitochondrial</molecule>
    <subcellularLocation>
        <location evidence="1">Mitochondrion</location>
    </subcellularLocation>
</comment>
<comment type="subcellular location">
    <molecule>Isoform Cytoplasmic</molecule>
    <subcellularLocation>
        <location evidence="1">Cytoplasm</location>
    </subcellularLocation>
</comment>
<comment type="alternative products">
    <event type="alternative initiation"/>
    <isoform>
        <id>A2TIL1-1</id>
        <name>Mitochondrial</name>
        <sequence type="displayed"/>
    </isoform>
    <isoform>
        <id>A2TIL1-2</id>
        <name>Cytoplasmic</name>
        <sequence type="described" ref="VSP_030441"/>
    </isoform>
</comment>
<comment type="miscellaneous">
    <text evidence="1">The active site is a redox-active disulfide bond.</text>
</comment>
<comment type="similarity">
    <text evidence="4">Belongs to the class-I pyridine nucleotide-disulfide oxidoreductase family.</text>
</comment>